<feature type="chain" id="PRO_1000198384" description="Dual-action ribosomal maturation protein DarP">
    <location>
        <begin position="1"/>
        <end position="183"/>
    </location>
</feature>
<evidence type="ECO:0000255" key="1">
    <source>
        <dbReference type="HAMAP-Rule" id="MF_00765"/>
    </source>
</evidence>
<dbReference type="EMBL" id="CU928164">
    <property type="protein sequence ID" value="CAR20805.1"/>
    <property type="molecule type" value="Genomic_DNA"/>
</dbReference>
<dbReference type="RefSeq" id="WP_000166273.1">
    <property type="nucleotide sequence ID" value="NC_011750.1"/>
</dbReference>
<dbReference type="RefSeq" id="YP_002410566.1">
    <property type="nucleotide sequence ID" value="NC_011750.1"/>
</dbReference>
<dbReference type="SMR" id="B7NUE9"/>
<dbReference type="STRING" id="585057.ECIAI39_4708"/>
<dbReference type="KEGG" id="ect:ECIAI39_4708"/>
<dbReference type="PATRIC" id="fig|585057.6.peg.4858"/>
<dbReference type="HOGENOM" id="CLU_106757_2_0_6"/>
<dbReference type="Proteomes" id="UP000000749">
    <property type="component" value="Chromosome"/>
</dbReference>
<dbReference type="GO" id="GO:0005829">
    <property type="term" value="C:cytosol"/>
    <property type="evidence" value="ECO:0007669"/>
    <property type="project" value="TreeGrafter"/>
</dbReference>
<dbReference type="GO" id="GO:0043022">
    <property type="term" value="F:ribosome binding"/>
    <property type="evidence" value="ECO:0007669"/>
    <property type="project" value="UniProtKB-UniRule"/>
</dbReference>
<dbReference type="GO" id="GO:0019843">
    <property type="term" value="F:rRNA binding"/>
    <property type="evidence" value="ECO:0007669"/>
    <property type="project" value="UniProtKB-UniRule"/>
</dbReference>
<dbReference type="GO" id="GO:1902626">
    <property type="term" value="P:assembly of large subunit precursor of preribosome"/>
    <property type="evidence" value="ECO:0007669"/>
    <property type="project" value="UniProtKB-UniRule"/>
</dbReference>
<dbReference type="CDD" id="cd16331">
    <property type="entry name" value="YjgA-like"/>
    <property type="match status" value="1"/>
</dbReference>
<dbReference type="FunFam" id="1.10.60.30:FF:000001">
    <property type="entry name" value="UPF0307 protein YjgA"/>
    <property type="match status" value="1"/>
</dbReference>
<dbReference type="FunFam" id="1.10.60.30:FF:000002">
    <property type="entry name" value="UPF0307 protein YjgA"/>
    <property type="match status" value="1"/>
</dbReference>
<dbReference type="Gene3D" id="1.10.60.30">
    <property type="entry name" value="PSPTO4464-like domains"/>
    <property type="match status" value="2"/>
</dbReference>
<dbReference type="HAMAP" id="MF_00765">
    <property type="entry name" value="DarP"/>
    <property type="match status" value="1"/>
</dbReference>
<dbReference type="InterPro" id="IPR006839">
    <property type="entry name" value="DarP"/>
</dbReference>
<dbReference type="InterPro" id="IPR023153">
    <property type="entry name" value="DarP_sf"/>
</dbReference>
<dbReference type="NCBIfam" id="NF003593">
    <property type="entry name" value="PRK05255.1-1"/>
    <property type="match status" value="1"/>
</dbReference>
<dbReference type="PANTHER" id="PTHR38101">
    <property type="entry name" value="UPF0307 PROTEIN YJGA"/>
    <property type="match status" value="1"/>
</dbReference>
<dbReference type="PANTHER" id="PTHR38101:SF1">
    <property type="entry name" value="UPF0307 PROTEIN YJGA"/>
    <property type="match status" value="1"/>
</dbReference>
<dbReference type="Pfam" id="PF04751">
    <property type="entry name" value="DarP"/>
    <property type="match status" value="1"/>
</dbReference>
<dbReference type="PIRSF" id="PIRSF016183">
    <property type="entry name" value="UCP016183"/>
    <property type="match status" value="1"/>
</dbReference>
<dbReference type="SUPFAM" id="SSF158710">
    <property type="entry name" value="PSPTO4464-like"/>
    <property type="match status" value="1"/>
</dbReference>
<organism>
    <name type="scientific">Escherichia coli O7:K1 (strain IAI39 / ExPEC)</name>
    <dbReference type="NCBI Taxonomy" id="585057"/>
    <lineage>
        <taxon>Bacteria</taxon>
        <taxon>Pseudomonadati</taxon>
        <taxon>Pseudomonadota</taxon>
        <taxon>Gammaproteobacteria</taxon>
        <taxon>Enterobacterales</taxon>
        <taxon>Enterobacteriaceae</taxon>
        <taxon>Escherichia</taxon>
    </lineage>
</organism>
<comment type="function">
    <text evidence="1">Member of a network of 50S ribosomal subunit biogenesis factors which assembles along the 30S-50S interface, preventing incorrect 23S rRNA structures from forming. Promotes peptidyl transferase center (PTC) maturation.</text>
</comment>
<comment type="subcellular location">
    <subcellularLocation>
        <location evidence="1">Cytoplasm</location>
    </subcellularLocation>
    <text evidence="1">Associates with late stage pre-50S ribosomal subunits.</text>
</comment>
<comment type="similarity">
    <text evidence="1">Belongs to the DarP family.</text>
</comment>
<gene>
    <name evidence="1" type="primary">darP</name>
    <name type="ordered locus">ECIAI39_4708</name>
</gene>
<protein>
    <recommendedName>
        <fullName evidence="1">Dual-action ribosomal maturation protein DarP</fullName>
    </recommendedName>
    <alternativeName>
        <fullName evidence="1">Large ribosomal subunit assembly factor DarP</fullName>
    </alternativeName>
</protein>
<proteinExistence type="inferred from homology"/>
<keyword id="KW-0963">Cytoplasm</keyword>
<keyword id="KW-0690">Ribosome biogenesis</keyword>
<keyword id="KW-0694">RNA-binding</keyword>
<keyword id="KW-0699">rRNA-binding</keyword>
<accession>B7NUE9</accession>
<sequence length="183" mass="21402">MTKQPEDWLDDVPGDDIEDEDDEIIWVSKSEIKRDAEELKRLGAEIVDLGKNALDKIPLDADLRAAIELAQRIKMEGRRRQLQLIGKMLRQRDVEPIRQALDKLKNRHNQQVVLFHKLENLRDRLIDQGDDAIAEVLNLWPDADRQQLRTRIRNAKKEKEGNKPPKSARQIFQYLRELAENEG</sequence>
<name>DARP_ECO7I</name>
<reference key="1">
    <citation type="journal article" date="2009" name="PLoS Genet.">
        <title>Organised genome dynamics in the Escherichia coli species results in highly diverse adaptive paths.</title>
        <authorList>
            <person name="Touchon M."/>
            <person name="Hoede C."/>
            <person name="Tenaillon O."/>
            <person name="Barbe V."/>
            <person name="Baeriswyl S."/>
            <person name="Bidet P."/>
            <person name="Bingen E."/>
            <person name="Bonacorsi S."/>
            <person name="Bouchier C."/>
            <person name="Bouvet O."/>
            <person name="Calteau A."/>
            <person name="Chiapello H."/>
            <person name="Clermont O."/>
            <person name="Cruveiller S."/>
            <person name="Danchin A."/>
            <person name="Diard M."/>
            <person name="Dossat C."/>
            <person name="Karoui M.E."/>
            <person name="Frapy E."/>
            <person name="Garry L."/>
            <person name="Ghigo J.M."/>
            <person name="Gilles A.M."/>
            <person name="Johnson J."/>
            <person name="Le Bouguenec C."/>
            <person name="Lescat M."/>
            <person name="Mangenot S."/>
            <person name="Martinez-Jehanne V."/>
            <person name="Matic I."/>
            <person name="Nassif X."/>
            <person name="Oztas S."/>
            <person name="Petit M.A."/>
            <person name="Pichon C."/>
            <person name="Rouy Z."/>
            <person name="Ruf C.S."/>
            <person name="Schneider D."/>
            <person name="Tourret J."/>
            <person name="Vacherie B."/>
            <person name="Vallenet D."/>
            <person name="Medigue C."/>
            <person name="Rocha E.P.C."/>
            <person name="Denamur E."/>
        </authorList>
    </citation>
    <scope>NUCLEOTIDE SEQUENCE [LARGE SCALE GENOMIC DNA]</scope>
    <source>
        <strain>IAI39 / ExPEC</strain>
    </source>
</reference>